<dbReference type="EC" id="3.1.-.-" evidence="1"/>
<dbReference type="EMBL" id="BA000023">
    <property type="protein sequence ID" value="BAK54728.1"/>
    <property type="molecule type" value="Genomic_DNA"/>
</dbReference>
<dbReference type="RefSeq" id="WP_010980153.1">
    <property type="nucleotide sequence ID" value="NC_003106.2"/>
</dbReference>
<dbReference type="SMR" id="Q96YU9"/>
<dbReference type="STRING" id="273063.STK_20780"/>
<dbReference type="GeneID" id="1460143"/>
<dbReference type="KEGG" id="sto:STK_20780"/>
<dbReference type="PATRIC" id="fig|273063.9.peg.2366"/>
<dbReference type="eggNOG" id="arCOG01741">
    <property type="taxonomic scope" value="Archaea"/>
</dbReference>
<dbReference type="OrthoDB" id="31300at2157"/>
<dbReference type="Proteomes" id="UP000001015">
    <property type="component" value="Chromosome"/>
</dbReference>
<dbReference type="GO" id="GO:0005737">
    <property type="term" value="C:cytoplasm"/>
    <property type="evidence" value="ECO:0007669"/>
    <property type="project" value="UniProtKB-SubCell"/>
</dbReference>
<dbReference type="GO" id="GO:0004519">
    <property type="term" value="F:endonuclease activity"/>
    <property type="evidence" value="ECO:0007669"/>
    <property type="project" value="UniProtKB-UniRule"/>
</dbReference>
<dbReference type="GO" id="GO:0046872">
    <property type="term" value="F:metal ion binding"/>
    <property type="evidence" value="ECO:0007669"/>
    <property type="project" value="UniProtKB-UniRule"/>
</dbReference>
<dbReference type="GO" id="GO:0070651">
    <property type="term" value="P:nonfunctional rRNA decay"/>
    <property type="evidence" value="ECO:0007669"/>
    <property type="project" value="TreeGrafter"/>
</dbReference>
<dbReference type="GO" id="GO:0070966">
    <property type="term" value="P:nuclear-transcribed mRNA catabolic process, no-go decay"/>
    <property type="evidence" value="ECO:0007669"/>
    <property type="project" value="InterPro"/>
</dbReference>
<dbReference type="GO" id="GO:0070481">
    <property type="term" value="P:nuclear-transcribed mRNA catabolic process, non-stop decay"/>
    <property type="evidence" value="ECO:0007669"/>
    <property type="project" value="InterPro"/>
</dbReference>
<dbReference type="GO" id="GO:0032790">
    <property type="term" value="P:ribosome disassembly"/>
    <property type="evidence" value="ECO:0007669"/>
    <property type="project" value="TreeGrafter"/>
</dbReference>
<dbReference type="GO" id="GO:0071025">
    <property type="term" value="P:RNA surveillance"/>
    <property type="evidence" value="ECO:0007669"/>
    <property type="project" value="InterPro"/>
</dbReference>
<dbReference type="FunFam" id="2.30.30.870:FF:000002">
    <property type="entry name" value="Protein pelota homolog"/>
    <property type="match status" value="1"/>
</dbReference>
<dbReference type="Gene3D" id="3.30.1330.30">
    <property type="match status" value="1"/>
</dbReference>
<dbReference type="Gene3D" id="3.30.420.60">
    <property type="entry name" value="eRF1 domain 2"/>
    <property type="match status" value="1"/>
</dbReference>
<dbReference type="Gene3D" id="2.30.30.870">
    <property type="entry name" value="Pelota, domain A"/>
    <property type="match status" value="1"/>
</dbReference>
<dbReference type="HAMAP" id="MF_01853">
    <property type="entry name" value="PelO"/>
    <property type="match status" value="1"/>
</dbReference>
<dbReference type="InterPro" id="IPR042226">
    <property type="entry name" value="eFR1_2_sf"/>
</dbReference>
<dbReference type="InterPro" id="IPR005140">
    <property type="entry name" value="eRF1_1_Pelota"/>
</dbReference>
<dbReference type="InterPro" id="IPR005142">
    <property type="entry name" value="eRF1_3"/>
</dbReference>
<dbReference type="InterPro" id="IPR038069">
    <property type="entry name" value="Pelota/DOM34_N"/>
</dbReference>
<dbReference type="InterPro" id="IPR023521">
    <property type="entry name" value="Pelota_arc"/>
</dbReference>
<dbReference type="InterPro" id="IPR029064">
    <property type="entry name" value="Ribosomal_eL30-like_sf"/>
</dbReference>
<dbReference type="InterPro" id="IPR004405">
    <property type="entry name" value="Transl-rel_pelota"/>
</dbReference>
<dbReference type="NCBIfam" id="TIGR00111">
    <property type="entry name" value="pelota"/>
    <property type="match status" value="1"/>
</dbReference>
<dbReference type="PANTHER" id="PTHR10853">
    <property type="entry name" value="PELOTA"/>
    <property type="match status" value="1"/>
</dbReference>
<dbReference type="PANTHER" id="PTHR10853:SF0">
    <property type="entry name" value="PROTEIN PELOTA HOMOLOG"/>
    <property type="match status" value="1"/>
</dbReference>
<dbReference type="Pfam" id="PF03463">
    <property type="entry name" value="eRF1_1"/>
    <property type="match status" value="1"/>
</dbReference>
<dbReference type="Pfam" id="PF03465">
    <property type="entry name" value="eRF1_3"/>
    <property type="match status" value="1"/>
</dbReference>
<dbReference type="SMART" id="SM01194">
    <property type="entry name" value="eRF1_1"/>
    <property type="match status" value="1"/>
</dbReference>
<dbReference type="SUPFAM" id="SSF159065">
    <property type="entry name" value="Dom34/Pelota N-terminal domain-like"/>
    <property type="match status" value="1"/>
</dbReference>
<dbReference type="SUPFAM" id="SSF55315">
    <property type="entry name" value="L30e-like"/>
    <property type="match status" value="1"/>
</dbReference>
<dbReference type="SUPFAM" id="SSF53137">
    <property type="entry name" value="Translational machinery components"/>
    <property type="match status" value="1"/>
</dbReference>
<proteinExistence type="inferred from homology"/>
<protein>
    <recommendedName>
        <fullName evidence="1">Protein pelota homolog</fullName>
        <ecNumber evidence="1">3.1.-.-</ecNumber>
    </recommendedName>
</protein>
<keyword id="KW-0963">Cytoplasm</keyword>
<keyword id="KW-0255">Endonuclease</keyword>
<keyword id="KW-0378">Hydrolase</keyword>
<keyword id="KW-0479">Metal-binding</keyword>
<keyword id="KW-0540">Nuclease</keyword>
<keyword id="KW-1185">Reference proteome</keyword>
<organism>
    <name type="scientific">Sulfurisphaera tokodaii (strain DSM 16993 / JCM 10545 / NBRC 100140 / 7)</name>
    <name type="common">Sulfolobus tokodaii</name>
    <dbReference type="NCBI Taxonomy" id="273063"/>
    <lineage>
        <taxon>Archaea</taxon>
        <taxon>Thermoproteota</taxon>
        <taxon>Thermoprotei</taxon>
        <taxon>Sulfolobales</taxon>
        <taxon>Sulfolobaceae</taxon>
        <taxon>Sulfurisphaera</taxon>
    </lineage>
</organism>
<comment type="function">
    <text evidence="1">May function in recognizing stalled ribosomes, interact with stem-loop structures in stalled mRNA molecules, and effect endonucleolytic cleavage of the mRNA. May play a role in the release non-functional ribosomes and degradation of damaged mRNAs. Has endoribonuclease activity.</text>
</comment>
<comment type="cofactor">
    <cofactor evidence="1">
        <name>a divalent metal cation</name>
        <dbReference type="ChEBI" id="CHEBI:60240"/>
    </cofactor>
</comment>
<comment type="subunit">
    <text evidence="1">Monomer.</text>
</comment>
<comment type="subcellular location">
    <subcellularLocation>
        <location evidence="1">Cytoplasm</location>
    </subcellularLocation>
</comment>
<comment type="domain">
    <text evidence="1">The N-terminal domain has the RNA-binding Sm fold. It harbors the endoribonuclease activity.</text>
</comment>
<comment type="similarity">
    <text evidence="1">Belongs to the eukaryotic release factor 1 family. Pelota subfamily.</text>
</comment>
<feature type="chain" id="PRO_0000361824" description="Protein pelota homolog">
    <location>
        <begin position="1"/>
        <end position="341"/>
    </location>
</feature>
<accession>Q96YU9</accession>
<accession>F9VP81</accession>
<reference key="1">
    <citation type="journal article" date="2001" name="DNA Res.">
        <title>Complete genome sequence of an aerobic thermoacidophilic Crenarchaeon, Sulfolobus tokodaii strain7.</title>
        <authorList>
            <person name="Kawarabayasi Y."/>
            <person name="Hino Y."/>
            <person name="Horikawa H."/>
            <person name="Jin-no K."/>
            <person name="Takahashi M."/>
            <person name="Sekine M."/>
            <person name="Baba S."/>
            <person name="Ankai A."/>
            <person name="Kosugi H."/>
            <person name="Hosoyama A."/>
            <person name="Fukui S."/>
            <person name="Nagai Y."/>
            <person name="Nishijima K."/>
            <person name="Otsuka R."/>
            <person name="Nakazawa H."/>
            <person name="Takamiya M."/>
            <person name="Kato Y."/>
            <person name="Yoshizawa T."/>
            <person name="Tanaka T."/>
            <person name="Kudoh Y."/>
            <person name="Yamazaki J."/>
            <person name="Kushida N."/>
            <person name="Oguchi A."/>
            <person name="Aoki K."/>
            <person name="Masuda S."/>
            <person name="Yanagii M."/>
            <person name="Nishimura M."/>
            <person name="Yamagishi A."/>
            <person name="Oshima T."/>
            <person name="Kikuchi H."/>
        </authorList>
    </citation>
    <scope>NUCLEOTIDE SEQUENCE [LARGE SCALE GENOMIC DNA]</scope>
    <source>
        <strain>DSM 16993 / JCM 10545 / NBRC 100140 / 7</strain>
    </source>
</reference>
<evidence type="ECO:0000255" key="1">
    <source>
        <dbReference type="HAMAP-Rule" id="MF_01853"/>
    </source>
</evidence>
<gene>
    <name evidence="1" type="primary">pelA</name>
    <name type="ordered locus">STK_20780</name>
</gene>
<sequence length="341" mass="39390">MKILEFDDKKGIMKLHIENEDDLWILHIILKKGDRVVAKTTRDVSMGRESRRIPMIIKLQVEYTEFQSFTSRLRIHGIILDAPERFGIKGSHHTINLDIGDEIVIEKDHWNKFEIEKIKRQEEKHLKMLIVLVDFDEYLIALPMKQGIRILAEKSLRTPNKEEENIIEDNAKEVANEVLSYAESLGIEVVLLAGPGPFKEIVSNFLKNIKLYVDSVSSATRSGLNEILKRDIIDQISRDYEISEETKIMEKIMENLAKNTGLVAYGKEEVKKSAEYGAVDKLLVIEDLLSSDEEERMEIEKIMEEVENKNGRVLIVPKDSPIYYEVRNLTGLIALLRFRIN</sequence>
<name>PELO_SULTO</name>